<sequence>MTPRVSDPFTGQSIESARRTLAARLRSAQLEEAELDARILLGAALGLDLTGLIAQAARLLTEAEASRIAQHAQRRIAGEPVARILGTREFWGLPFRLSDATLVPRPDTETVVERALELFREQKATQQPRIADIGTGSGAILLALLHDIPGAFGVGTDLSLNALETARGNAVTLGLADRSAFVACSYLAALRGPFDLIVSNPPYIPSAEIPKLSLEVREHDPHLALDGGNDGYDAYRALIPQAAERLAPGGALIVEAGQGQARNIETLLTAAALVVDRPPKADLAGIPRAVSARKMPP</sequence>
<feature type="chain" id="PRO_0000414505" description="Release factor glutamine methyltransferase">
    <location>
        <begin position="1"/>
        <end position="297"/>
    </location>
</feature>
<feature type="binding site" evidence="1">
    <location>
        <begin position="134"/>
        <end position="138"/>
    </location>
    <ligand>
        <name>S-adenosyl-L-methionine</name>
        <dbReference type="ChEBI" id="CHEBI:59789"/>
    </ligand>
</feature>
<feature type="binding site" evidence="1">
    <location>
        <position position="157"/>
    </location>
    <ligand>
        <name>S-adenosyl-L-methionine</name>
        <dbReference type="ChEBI" id="CHEBI:59789"/>
    </ligand>
</feature>
<feature type="binding site" evidence="1">
    <location>
        <begin position="200"/>
        <end position="203"/>
    </location>
    <ligand>
        <name>substrate</name>
    </ligand>
</feature>
<feature type="binding site" evidence="1">
    <location>
        <position position="200"/>
    </location>
    <ligand>
        <name>S-adenosyl-L-methionine</name>
        <dbReference type="ChEBI" id="CHEBI:59789"/>
    </ligand>
</feature>
<proteinExistence type="inferred from homology"/>
<name>PRMC_BRADU</name>
<dbReference type="EC" id="2.1.1.297" evidence="1"/>
<dbReference type="EMBL" id="BA000040">
    <property type="protein sequence ID" value="BAC45484.1"/>
    <property type="molecule type" value="Genomic_DNA"/>
</dbReference>
<dbReference type="RefSeq" id="NP_766859.1">
    <property type="nucleotide sequence ID" value="NC_004463.1"/>
</dbReference>
<dbReference type="RefSeq" id="WP_011083051.1">
    <property type="nucleotide sequence ID" value="NC_004463.1"/>
</dbReference>
<dbReference type="SMR" id="Q89XT8"/>
<dbReference type="FunCoup" id="Q89XT8">
    <property type="interactions" value="553"/>
</dbReference>
<dbReference type="STRING" id="224911.AAV28_40340"/>
<dbReference type="EnsemblBacteria" id="BAC45484">
    <property type="protein sequence ID" value="BAC45484"/>
    <property type="gene ID" value="BAC45484"/>
</dbReference>
<dbReference type="GeneID" id="46495371"/>
<dbReference type="KEGG" id="bja:blr0219"/>
<dbReference type="PATRIC" id="fig|224911.5.peg.213"/>
<dbReference type="eggNOG" id="COG2890">
    <property type="taxonomic scope" value="Bacteria"/>
</dbReference>
<dbReference type="HOGENOM" id="CLU_018398_3_1_5"/>
<dbReference type="InParanoid" id="Q89XT8"/>
<dbReference type="OrthoDB" id="9800643at2"/>
<dbReference type="PhylomeDB" id="Q89XT8"/>
<dbReference type="Proteomes" id="UP000002526">
    <property type="component" value="Chromosome"/>
</dbReference>
<dbReference type="GO" id="GO:0003676">
    <property type="term" value="F:nucleic acid binding"/>
    <property type="evidence" value="ECO:0007669"/>
    <property type="project" value="InterPro"/>
</dbReference>
<dbReference type="GO" id="GO:0102559">
    <property type="term" value="F:protein-(glutamine-N5) methyltransferase activity"/>
    <property type="evidence" value="ECO:0007669"/>
    <property type="project" value="UniProtKB-EC"/>
</dbReference>
<dbReference type="GO" id="GO:0036009">
    <property type="term" value="F:protein-glutamine N-methyltransferase activity"/>
    <property type="evidence" value="ECO:0000318"/>
    <property type="project" value="GO_Central"/>
</dbReference>
<dbReference type="GO" id="GO:0032259">
    <property type="term" value="P:methylation"/>
    <property type="evidence" value="ECO:0007669"/>
    <property type="project" value="UniProtKB-KW"/>
</dbReference>
<dbReference type="GO" id="GO:0006415">
    <property type="term" value="P:translational termination"/>
    <property type="evidence" value="ECO:0000318"/>
    <property type="project" value="GO_Central"/>
</dbReference>
<dbReference type="CDD" id="cd02440">
    <property type="entry name" value="AdoMet_MTases"/>
    <property type="match status" value="1"/>
</dbReference>
<dbReference type="FunFam" id="1.10.8.10:FF:000032">
    <property type="entry name" value="Release factor glutamine methyltransferase"/>
    <property type="match status" value="1"/>
</dbReference>
<dbReference type="Gene3D" id="1.10.8.10">
    <property type="entry name" value="DNA helicase RuvA subunit, C-terminal domain"/>
    <property type="match status" value="1"/>
</dbReference>
<dbReference type="Gene3D" id="3.40.50.150">
    <property type="entry name" value="Vaccinia Virus protein VP39"/>
    <property type="match status" value="1"/>
</dbReference>
<dbReference type="HAMAP" id="MF_02126">
    <property type="entry name" value="RF_methyltr_PrmC"/>
    <property type="match status" value="1"/>
</dbReference>
<dbReference type="InterPro" id="IPR002052">
    <property type="entry name" value="DNA_methylase_N6_adenine_CS"/>
</dbReference>
<dbReference type="InterPro" id="IPR004556">
    <property type="entry name" value="HemK-like"/>
</dbReference>
<dbReference type="InterPro" id="IPR050320">
    <property type="entry name" value="N5-glutamine_MTase"/>
</dbReference>
<dbReference type="InterPro" id="IPR040758">
    <property type="entry name" value="PrmC_N"/>
</dbReference>
<dbReference type="InterPro" id="IPR019874">
    <property type="entry name" value="RF_methyltr_PrmC"/>
</dbReference>
<dbReference type="InterPro" id="IPR029063">
    <property type="entry name" value="SAM-dependent_MTases_sf"/>
</dbReference>
<dbReference type="InterPro" id="IPR007848">
    <property type="entry name" value="Small_mtfrase_dom"/>
</dbReference>
<dbReference type="NCBIfam" id="TIGR00536">
    <property type="entry name" value="hemK_fam"/>
    <property type="match status" value="1"/>
</dbReference>
<dbReference type="NCBIfam" id="TIGR03534">
    <property type="entry name" value="RF_mod_PrmC"/>
    <property type="match status" value="1"/>
</dbReference>
<dbReference type="PANTHER" id="PTHR18895">
    <property type="entry name" value="HEMK METHYLTRANSFERASE"/>
    <property type="match status" value="1"/>
</dbReference>
<dbReference type="PANTHER" id="PTHR18895:SF74">
    <property type="entry name" value="MTRF1L RELEASE FACTOR GLUTAMINE METHYLTRANSFERASE"/>
    <property type="match status" value="1"/>
</dbReference>
<dbReference type="Pfam" id="PF05175">
    <property type="entry name" value="MTS"/>
    <property type="match status" value="1"/>
</dbReference>
<dbReference type="Pfam" id="PF17827">
    <property type="entry name" value="PrmC_N"/>
    <property type="match status" value="1"/>
</dbReference>
<dbReference type="SUPFAM" id="SSF53335">
    <property type="entry name" value="S-adenosyl-L-methionine-dependent methyltransferases"/>
    <property type="match status" value="1"/>
</dbReference>
<keyword id="KW-0489">Methyltransferase</keyword>
<keyword id="KW-1185">Reference proteome</keyword>
<keyword id="KW-0949">S-adenosyl-L-methionine</keyword>
<keyword id="KW-0808">Transferase</keyword>
<comment type="function">
    <text evidence="1">Methylates the class 1 translation termination release factors RF1/PrfA and RF2/PrfB on the glutamine residue of the universally conserved GGQ motif.</text>
</comment>
<comment type="catalytic activity">
    <reaction evidence="1">
        <text>L-glutaminyl-[peptide chain release factor] + S-adenosyl-L-methionine = N(5)-methyl-L-glutaminyl-[peptide chain release factor] + S-adenosyl-L-homocysteine + H(+)</text>
        <dbReference type="Rhea" id="RHEA:42896"/>
        <dbReference type="Rhea" id="RHEA-COMP:10271"/>
        <dbReference type="Rhea" id="RHEA-COMP:10272"/>
        <dbReference type="ChEBI" id="CHEBI:15378"/>
        <dbReference type="ChEBI" id="CHEBI:30011"/>
        <dbReference type="ChEBI" id="CHEBI:57856"/>
        <dbReference type="ChEBI" id="CHEBI:59789"/>
        <dbReference type="ChEBI" id="CHEBI:61891"/>
        <dbReference type="EC" id="2.1.1.297"/>
    </reaction>
</comment>
<comment type="similarity">
    <text evidence="1">Belongs to the protein N5-glutamine methyltransferase family. PrmC subfamily.</text>
</comment>
<evidence type="ECO:0000255" key="1">
    <source>
        <dbReference type="HAMAP-Rule" id="MF_02126"/>
    </source>
</evidence>
<reference key="1">
    <citation type="journal article" date="2002" name="DNA Res.">
        <title>Complete genomic sequence of nitrogen-fixing symbiotic bacterium Bradyrhizobium japonicum USDA110.</title>
        <authorList>
            <person name="Kaneko T."/>
            <person name="Nakamura Y."/>
            <person name="Sato S."/>
            <person name="Minamisawa K."/>
            <person name="Uchiumi T."/>
            <person name="Sasamoto S."/>
            <person name="Watanabe A."/>
            <person name="Idesawa K."/>
            <person name="Iriguchi M."/>
            <person name="Kawashima K."/>
            <person name="Kohara M."/>
            <person name="Matsumoto M."/>
            <person name="Shimpo S."/>
            <person name="Tsuruoka H."/>
            <person name="Wada T."/>
            <person name="Yamada M."/>
            <person name="Tabata S."/>
        </authorList>
    </citation>
    <scope>NUCLEOTIDE SEQUENCE [LARGE SCALE GENOMIC DNA]</scope>
    <source>
        <strain>JCM 10833 / BCRC 13528 / IAM 13628 / NBRC 14792 / USDA 110</strain>
    </source>
</reference>
<organism>
    <name type="scientific">Bradyrhizobium diazoefficiens (strain JCM 10833 / BCRC 13528 / IAM 13628 / NBRC 14792 / USDA 110)</name>
    <dbReference type="NCBI Taxonomy" id="224911"/>
    <lineage>
        <taxon>Bacteria</taxon>
        <taxon>Pseudomonadati</taxon>
        <taxon>Pseudomonadota</taxon>
        <taxon>Alphaproteobacteria</taxon>
        <taxon>Hyphomicrobiales</taxon>
        <taxon>Nitrobacteraceae</taxon>
        <taxon>Bradyrhizobium</taxon>
    </lineage>
</organism>
<accession>Q89XT8</accession>
<protein>
    <recommendedName>
        <fullName evidence="1">Release factor glutamine methyltransferase</fullName>
        <shortName evidence="1">RF MTase</shortName>
        <ecNumber evidence="1">2.1.1.297</ecNumber>
    </recommendedName>
    <alternativeName>
        <fullName evidence="1">N5-glutamine methyltransferase PrmC</fullName>
    </alternativeName>
    <alternativeName>
        <fullName evidence="1">Protein-(glutamine-N5) MTase PrmC</fullName>
    </alternativeName>
    <alternativeName>
        <fullName evidence="1">Protein-glutamine N-methyltransferase PrmC</fullName>
    </alternativeName>
</protein>
<gene>
    <name evidence="1" type="primary">prmC</name>
    <name type="synonym">hemK</name>
    <name type="ordered locus">blr0219</name>
</gene>